<name>ISCS_ECO27</name>
<protein>
    <recommendedName>
        <fullName evidence="1">Cysteine desulfurase IscS</fullName>
        <ecNumber evidence="1">2.8.1.7</ecNumber>
    </recommendedName>
</protein>
<accession>B7UGX6</accession>
<reference key="1">
    <citation type="journal article" date="2009" name="J. Bacteriol.">
        <title>Complete genome sequence and comparative genome analysis of enteropathogenic Escherichia coli O127:H6 strain E2348/69.</title>
        <authorList>
            <person name="Iguchi A."/>
            <person name="Thomson N.R."/>
            <person name="Ogura Y."/>
            <person name="Saunders D."/>
            <person name="Ooka T."/>
            <person name="Henderson I.R."/>
            <person name="Harris D."/>
            <person name="Asadulghani M."/>
            <person name="Kurokawa K."/>
            <person name="Dean P."/>
            <person name="Kenny B."/>
            <person name="Quail M.A."/>
            <person name="Thurston S."/>
            <person name="Dougan G."/>
            <person name="Hayashi T."/>
            <person name="Parkhill J."/>
            <person name="Frankel G."/>
        </authorList>
    </citation>
    <scope>NUCLEOTIDE SEQUENCE [LARGE SCALE GENOMIC DNA]</scope>
    <source>
        <strain>E2348/69 / EPEC</strain>
    </source>
</reference>
<sequence length="404" mass="45090">MKLPIYLDYSATTPVDPRVAEKMMQFMTMDGTFGNPASRSHRFGWQAEEAVDIARNQIADLVGADPREIVFTSGATESDNLAIKGAANFYQKKGKHIITSKTEHKAVLDTCRQLEREGFEVTYLAPQRNGIIDLKELEAAMRDDTILVSIMHVNNEIGVVQDIAAIGEMCRARGIIYHVDATQSVGKLPIDLSQLKVDLMSFSGHKIYGPKGIGALYVRRKPRVRIEAQMHGGGHERGMRSGTLPVHQIVGMGEAYRIAKEEMATEMERLRGLRNRLWNGIKDIEEVYLNGDLEHGAPNILNVSFNYVEGESLIMALKDLAVSSGSACTSASLEPSYVLRALGLNDELAHSSIRFSLGRFTTEEEIDYTIELVRKSIGRLRDLSPLWEMYKQGVDLNSIEWAHH</sequence>
<gene>
    <name evidence="1" type="primary">iscS</name>
    <name type="ordered locus">E2348C_2813</name>
</gene>
<feature type="chain" id="PRO_1000133115" description="Cysteine desulfurase IscS">
    <location>
        <begin position="1"/>
        <end position="404"/>
    </location>
</feature>
<feature type="active site" description="Cysteine persulfide intermediate" evidence="1">
    <location>
        <position position="328"/>
    </location>
</feature>
<feature type="binding site" evidence="1">
    <location>
        <begin position="75"/>
        <end position="76"/>
    </location>
    <ligand>
        <name>pyridoxal 5'-phosphate</name>
        <dbReference type="ChEBI" id="CHEBI:597326"/>
    </ligand>
</feature>
<feature type="binding site" evidence="1">
    <location>
        <position position="155"/>
    </location>
    <ligand>
        <name>pyridoxal 5'-phosphate</name>
        <dbReference type="ChEBI" id="CHEBI:597326"/>
    </ligand>
</feature>
<feature type="binding site" evidence="1">
    <location>
        <position position="183"/>
    </location>
    <ligand>
        <name>pyridoxal 5'-phosphate</name>
        <dbReference type="ChEBI" id="CHEBI:597326"/>
    </ligand>
</feature>
<feature type="binding site" evidence="1">
    <location>
        <begin position="203"/>
        <end position="205"/>
    </location>
    <ligand>
        <name>pyridoxal 5'-phosphate</name>
        <dbReference type="ChEBI" id="CHEBI:597326"/>
    </ligand>
</feature>
<feature type="binding site" evidence="1">
    <location>
        <position position="243"/>
    </location>
    <ligand>
        <name>pyridoxal 5'-phosphate</name>
        <dbReference type="ChEBI" id="CHEBI:597326"/>
    </ligand>
</feature>
<feature type="binding site" description="via persulfide group" evidence="1">
    <location>
        <position position="328"/>
    </location>
    <ligand>
        <name>[2Fe-2S] cluster</name>
        <dbReference type="ChEBI" id="CHEBI:190135"/>
        <note>ligand shared with IscU</note>
    </ligand>
</feature>
<feature type="modified residue" description="N6-(pyridoxal phosphate)lysine" evidence="1">
    <location>
        <position position="206"/>
    </location>
</feature>
<comment type="function">
    <text evidence="1">Master enzyme that delivers sulfur to a number of partners involved in Fe-S cluster assembly, tRNA modification or cofactor biosynthesis. Catalyzes the removal of elemental sulfur and selenium atoms from cysteine and selenocysteine to produce alanine. Functions as a sulfur delivery protein for Fe-S cluster synthesis onto IscU, an Fe-S scaffold assembly protein, as well as other S acceptor proteins. Also functions as a selenium delivery protein in the pathway for the biosynthesis of selenophosphate.</text>
</comment>
<comment type="catalytic activity">
    <reaction evidence="1">
        <text>(sulfur carrier)-H + L-cysteine = (sulfur carrier)-SH + L-alanine</text>
        <dbReference type="Rhea" id="RHEA:43892"/>
        <dbReference type="Rhea" id="RHEA-COMP:14737"/>
        <dbReference type="Rhea" id="RHEA-COMP:14739"/>
        <dbReference type="ChEBI" id="CHEBI:29917"/>
        <dbReference type="ChEBI" id="CHEBI:35235"/>
        <dbReference type="ChEBI" id="CHEBI:57972"/>
        <dbReference type="ChEBI" id="CHEBI:64428"/>
        <dbReference type="EC" id="2.8.1.7"/>
    </reaction>
</comment>
<comment type="cofactor">
    <cofactor evidence="1">
        <name>pyridoxal 5'-phosphate</name>
        <dbReference type="ChEBI" id="CHEBI:597326"/>
    </cofactor>
</comment>
<comment type="pathway">
    <text evidence="1">Cofactor biosynthesis; iron-sulfur cluster biosynthesis.</text>
</comment>
<comment type="subunit">
    <text evidence="1">Homodimer. Forms a heterotetramer with IscU, interacts with other sulfur acceptors.</text>
</comment>
<comment type="subcellular location">
    <subcellularLocation>
        <location evidence="1">Cytoplasm</location>
    </subcellularLocation>
</comment>
<comment type="similarity">
    <text evidence="1">Belongs to the class-V pyridoxal-phosphate-dependent aminotransferase family. NifS/IscS subfamily.</text>
</comment>
<evidence type="ECO:0000255" key="1">
    <source>
        <dbReference type="HAMAP-Rule" id="MF_00331"/>
    </source>
</evidence>
<proteinExistence type="inferred from homology"/>
<organism>
    <name type="scientific">Escherichia coli O127:H6 (strain E2348/69 / EPEC)</name>
    <dbReference type="NCBI Taxonomy" id="574521"/>
    <lineage>
        <taxon>Bacteria</taxon>
        <taxon>Pseudomonadati</taxon>
        <taxon>Pseudomonadota</taxon>
        <taxon>Gammaproteobacteria</taxon>
        <taxon>Enterobacterales</taxon>
        <taxon>Enterobacteriaceae</taxon>
        <taxon>Escherichia</taxon>
    </lineage>
</organism>
<dbReference type="EC" id="2.8.1.7" evidence="1"/>
<dbReference type="EMBL" id="FM180568">
    <property type="protein sequence ID" value="CAS10361.1"/>
    <property type="molecule type" value="Genomic_DNA"/>
</dbReference>
<dbReference type="RefSeq" id="WP_001295373.1">
    <property type="nucleotide sequence ID" value="NC_011601.1"/>
</dbReference>
<dbReference type="SMR" id="B7UGX6"/>
<dbReference type="GeneID" id="93774606"/>
<dbReference type="KEGG" id="ecg:E2348C_2813"/>
<dbReference type="HOGENOM" id="CLU_003433_0_2_6"/>
<dbReference type="UniPathway" id="UPA00266"/>
<dbReference type="Proteomes" id="UP000008205">
    <property type="component" value="Chromosome"/>
</dbReference>
<dbReference type="GO" id="GO:1990221">
    <property type="term" value="C:L-cysteine desulfurase complex"/>
    <property type="evidence" value="ECO:0007669"/>
    <property type="project" value="UniProtKB-ARBA"/>
</dbReference>
<dbReference type="GO" id="GO:0051537">
    <property type="term" value="F:2 iron, 2 sulfur cluster binding"/>
    <property type="evidence" value="ECO:0007669"/>
    <property type="project" value="UniProtKB-UniRule"/>
</dbReference>
<dbReference type="GO" id="GO:0031071">
    <property type="term" value="F:cysteine desulfurase activity"/>
    <property type="evidence" value="ECO:0007669"/>
    <property type="project" value="UniProtKB-UniRule"/>
</dbReference>
<dbReference type="GO" id="GO:0046872">
    <property type="term" value="F:metal ion binding"/>
    <property type="evidence" value="ECO:0007669"/>
    <property type="project" value="UniProtKB-KW"/>
</dbReference>
<dbReference type="GO" id="GO:0030170">
    <property type="term" value="F:pyridoxal phosphate binding"/>
    <property type="evidence" value="ECO:0007669"/>
    <property type="project" value="UniProtKB-UniRule"/>
</dbReference>
<dbReference type="GO" id="GO:0044571">
    <property type="term" value="P:[2Fe-2S] cluster assembly"/>
    <property type="evidence" value="ECO:0007669"/>
    <property type="project" value="UniProtKB-UniRule"/>
</dbReference>
<dbReference type="FunFam" id="3.40.640.10:FF:000003">
    <property type="entry name" value="Cysteine desulfurase IscS"/>
    <property type="match status" value="1"/>
</dbReference>
<dbReference type="FunFam" id="3.90.1150.10:FF:000002">
    <property type="entry name" value="Cysteine desulfurase IscS"/>
    <property type="match status" value="1"/>
</dbReference>
<dbReference type="Gene3D" id="3.90.1150.10">
    <property type="entry name" value="Aspartate Aminotransferase, domain 1"/>
    <property type="match status" value="1"/>
</dbReference>
<dbReference type="Gene3D" id="3.40.640.10">
    <property type="entry name" value="Type I PLP-dependent aspartate aminotransferase-like (Major domain)"/>
    <property type="match status" value="1"/>
</dbReference>
<dbReference type="HAMAP" id="MF_00331">
    <property type="entry name" value="Cys_desulf_IscS"/>
    <property type="match status" value="1"/>
</dbReference>
<dbReference type="InterPro" id="IPR000192">
    <property type="entry name" value="Aminotrans_V_dom"/>
</dbReference>
<dbReference type="InterPro" id="IPR020578">
    <property type="entry name" value="Aminotrans_V_PyrdxlP_BS"/>
</dbReference>
<dbReference type="InterPro" id="IPR010240">
    <property type="entry name" value="Cys_deSase_IscS"/>
</dbReference>
<dbReference type="InterPro" id="IPR016454">
    <property type="entry name" value="Cysteine_dSase"/>
</dbReference>
<dbReference type="InterPro" id="IPR015424">
    <property type="entry name" value="PyrdxlP-dep_Trfase"/>
</dbReference>
<dbReference type="InterPro" id="IPR015421">
    <property type="entry name" value="PyrdxlP-dep_Trfase_major"/>
</dbReference>
<dbReference type="InterPro" id="IPR015422">
    <property type="entry name" value="PyrdxlP-dep_Trfase_small"/>
</dbReference>
<dbReference type="NCBIfam" id="TIGR02006">
    <property type="entry name" value="IscS"/>
    <property type="match status" value="1"/>
</dbReference>
<dbReference type="NCBIfam" id="NF002806">
    <property type="entry name" value="PRK02948.1"/>
    <property type="match status" value="1"/>
</dbReference>
<dbReference type="NCBIfam" id="NF010611">
    <property type="entry name" value="PRK14012.1"/>
    <property type="match status" value="1"/>
</dbReference>
<dbReference type="PANTHER" id="PTHR11601:SF34">
    <property type="entry name" value="CYSTEINE DESULFURASE"/>
    <property type="match status" value="1"/>
</dbReference>
<dbReference type="PANTHER" id="PTHR11601">
    <property type="entry name" value="CYSTEINE DESULFURYLASE FAMILY MEMBER"/>
    <property type="match status" value="1"/>
</dbReference>
<dbReference type="Pfam" id="PF00266">
    <property type="entry name" value="Aminotran_5"/>
    <property type="match status" value="1"/>
</dbReference>
<dbReference type="PIRSF" id="PIRSF005572">
    <property type="entry name" value="NifS"/>
    <property type="match status" value="1"/>
</dbReference>
<dbReference type="SUPFAM" id="SSF53383">
    <property type="entry name" value="PLP-dependent transferases"/>
    <property type="match status" value="1"/>
</dbReference>
<dbReference type="PROSITE" id="PS00595">
    <property type="entry name" value="AA_TRANSFER_CLASS_5"/>
    <property type="match status" value="1"/>
</dbReference>
<keyword id="KW-0001">2Fe-2S</keyword>
<keyword id="KW-0963">Cytoplasm</keyword>
<keyword id="KW-0408">Iron</keyword>
<keyword id="KW-0411">Iron-sulfur</keyword>
<keyword id="KW-0479">Metal-binding</keyword>
<keyword id="KW-0663">Pyridoxal phosphate</keyword>
<keyword id="KW-1185">Reference proteome</keyword>
<keyword id="KW-0808">Transferase</keyword>